<gene>
    <name evidence="1" type="primary">miaA</name>
    <name type="ordered locus">EcE24377A_4729</name>
</gene>
<accession>A7ZV40</accession>
<protein>
    <recommendedName>
        <fullName evidence="1">tRNA dimethylallyltransferase</fullName>
        <ecNumber evidence="1">2.5.1.75</ecNumber>
    </recommendedName>
    <alternativeName>
        <fullName evidence="1">Dimethylallyl diphosphate:tRNA dimethylallyltransferase</fullName>
        <shortName evidence="1">DMAPP:tRNA dimethylallyltransferase</shortName>
        <shortName evidence="1">DMATase</shortName>
    </alternativeName>
    <alternativeName>
        <fullName evidence="1">Isopentenyl-diphosphate:tRNA isopentenyltransferase</fullName>
        <shortName evidence="1">IPP transferase</shortName>
        <shortName evidence="1">IPPT</shortName>
        <shortName evidence="1">IPTase</shortName>
    </alternativeName>
</protein>
<dbReference type="EC" id="2.5.1.75" evidence="1"/>
<dbReference type="EMBL" id="CP000800">
    <property type="protein sequence ID" value="ABV19493.1"/>
    <property type="molecule type" value="Genomic_DNA"/>
</dbReference>
<dbReference type="RefSeq" id="WP_001280345.1">
    <property type="nucleotide sequence ID" value="NC_009801.1"/>
</dbReference>
<dbReference type="SMR" id="A7ZV40"/>
<dbReference type="GeneID" id="93777650"/>
<dbReference type="KEGG" id="ecw:EcE24377A_4729"/>
<dbReference type="HOGENOM" id="CLU_032616_0_0_6"/>
<dbReference type="Proteomes" id="UP000001122">
    <property type="component" value="Chromosome"/>
</dbReference>
<dbReference type="GO" id="GO:0005524">
    <property type="term" value="F:ATP binding"/>
    <property type="evidence" value="ECO:0007669"/>
    <property type="project" value="UniProtKB-UniRule"/>
</dbReference>
<dbReference type="GO" id="GO:0052381">
    <property type="term" value="F:tRNA dimethylallyltransferase activity"/>
    <property type="evidence" value="ECO:0007669"/>
    <property type="project" value="UniProtKB-UniRule"/>
</dbReference>
<dbReference type="GO" id="GO:0006400">
    <property type="term" value="P:tRNA modification"/>
    <property type="evidence" value="ECO:0007669"/>
    <property type="project" value="TreeGrafter"/>
</dbReference>
<dbReference type="FunFam" id="1.10.20.140:FF:000001">
    <property type="entry name" value="tRNA dimethylallyltransferase"/>
    <property type="match status" value="1"/>
</dbReference>
<dbReference type="FunFam" id="1.10.287.890:FF:000001">
    <property type="entry name" value="tRNA dimethylallyltransferase"/>
    <property type="match status" value="1"/>
</dbReference>
<dbReference type="Gene3D" id="1.10.20.140">
    <property type="match status" value="1"/>
</dbReference>
<dbReference type="Gene3D" id="1.10.287.890">
    <property type="entry name" value="Crystal structure of tRNA isopentenylpyrophosphate transferase (bh2366) domain"/>
    <property type="match status" value="1"/>
</dbReference>
<dbReference type="Gene3D" id="3.40.50.300">
    <property type="entry name" value="P-loop containing nucleotide triphosphate hydrolases"/>
    <property type="match status" value="1"/>
</dbReference>
<dbReference type="HAMAP" id="MF_00185">
    <property type="entry name" value="IPP_trans"/>
    <property type="match status" value="1"/>
</dbReference>
<dbReference type="InterPro" id="IPR039657">
    <property type="entry name" value="Dimethylallyltransferase"/>
</dbReference>
<dbReference type="InterPro" id="IPR018022">
    <property type="entry name" value="IPT"/>
</dbReference>
<dbReference type="InterPro" id="IPR027417">
    <property type="entry name" value="P-loop_NTPase"/>
</dbReference>
<dbReference type="NCBIfam" id="TIGR00174">
    <property type="entry name" value="miaA"/>
    <property type="match status" value="1"/>
</dbReference>
<dbReference type="PANTHER" id="PTHR11088">
    <property type="entry name" value="TRNA DIMETHYLALLYLTRANSFERASE"/>
    <property type="match status" value="1"/>
</dbReference>
<dbReference type="PANTHER" id="PTHR11088:SF60">
    <property type="entry name" value="TRNA DIMETHYLALLYLTRANSFERASE"/>
    <property type="match status" value="1"/>
</dbReference>
<dbReference type="Pfam" id="PF01715">
    <property type="entry name" value="IPPT"/>
    <property type="match status" value="1"/>
</dbReference>
<dbReference type="SUPFAM" id="SSF52540">
    <property type="entry name" value="P-loop containing nucleoside triphosphate hydrolases"/>
    <property type="match status" value="1"/>
</dbReference>
<proteinExistence type="inferred from homology"/>
<sequence length="316" mass="35065">MSDISKASLPKAIFLMGPTASGKTALAIELRKILPVELISVDSALIYKGMDIGTAKPNAEELLAAPHRLLDIRDPSQAYSAADFRRDALAEMADITAAGRIPLLVGGTMLYFKALLEGLSPLPSADPEVRARIEQQAAEQGWESLHRQLQEVDPVAAARIHPNDPQRLSRALEVFFISGKTLTELTQTSGDALPYQVHQFAIAPASRELLHQRIEQRFHQMLASGFEAEVRALFARGDLHTDLPSIRCVGYRQMWSYLEGEISYDEMVYRGVCATRQLAKRQITWLRGWEGVHWLDSEKPEQARDEVLQVVGAIAG</sequence>
<reference key="1">
    <citation type="journal article" date="2008" name="J. Bacteriol.">
        <title>The pangenome structure of Escherichia coli: comparative genomic analysis of E. coli commensal and pathogenic isolates.</title>
        <authorList>
            <person name="Rasko D.A."/>
            <person name="Rosovitz M.J."/>
            <person name="Myers G.S.A."/>
            <person name="Mongodin E.F."/>
            <person name="Fricke W.F."/>
            <person name="Gajer P."/>
            <person name="Crabtree J."/>
            <person name="Sebaihia M."/>
            <person name="Thomson N.R."/>
            <person name="Chaudhuri R."/>
            <person name="Henderson I.R."/>
            <person name="Sperandio V."/>
            <person name="Ravel J."/>
        </authorList>
    </citation>
    <scope>NUCLEOTIDE SEQUENCE [LARGE SCALE GENOMIC DNA]</scope>
    <source>
        <strain>E24377A / ETEC</strain>
    </source>
</reference>
<name>MIAA_ECO24</name>
<keyword id="KW-0067">ATP-binding</keyword>
<keyword id="KW-0460">Magnesium</keyword>
<keyword id="KW-0547">Nucleotide-binding</keyword>
<keyword id="KW-1185">Reference proteome</keyword>
<keyword id="KW-0808">Transferase</keyword>
<keyword id="KW-0819">tRNA processing</keyword>
<comment type="function">
    <text evidence="1">Catalyzes the transfer of a dimethylallyl group onto the adenine at position 37 in tRNAs that read codons beginning with uridine, leading to the formation of N6-(dimethylallyl)adenosine (i(6)A).</text>
</comment>
<comment type="catalytic activity">
    <reaction evidence="1">
        <text>adenosine(37) in tRNA + dimethylallyl diphosphate = N(6)-dimethylallyladenosine(37) in tRNA + diphosphate</text>
        <dbReference type="Rhea" id="RHEA:26482"/>
        <dbReference type="Rhea" id="RHEA-COMP:10162"/>
        <dbReference type="Rhea" id="RHEA-COMP:10375"/>
        <dbReference type="ChEBI" id="CHEBI:33019"/>
        <dbReference type="ChEBI" id="CHEBI:57623"/>
        <dbReference type="ChEBI" id="CHEBI:74411"/>
        <dbReference type="ChEBI" id="CHEBI:74415"/>
        <dbReference type="EC" id="2.5.1.75"/>
    </reaction>
</comment>
<comment type="cofactor">
    <cofactor evidence="1">
        <name>Mg(2+)</name>
        <dbReference type="ChEBI" id="CHEBI:18420"/>
    </cofactor>
</comment>
<comment type="subunit">
    <text evidence="1">Monomer.</text>
</comment>
<comment type="similarity">
    <text evidence="1">Belongs to the IPP transferase family.</text>
</comment>
<feature type="chain" id="PRO_1000058432" description="tRNA dimethylallyltransferase">
    <location>
        <begin position="1"/>
        <end position="316"/>
    </location>
</feature>
<feature type="region of interest" description="Interaction with substrate tRNA" evidence="1">
    <location>
        <begin position="42"/>
        <end position="45"/>
    </location>
</feature>
<feature type="region of interest" description="Interaction with substrate tRNA" evidence="1">
    <location>
        <begin position="166"/>
        <end position="170"/>
    </location>
</feature>
<feature type="region of interest" description="Interaction with substrate tRNA" evidence="1">
    <location>
        <begin position="247"/>
        <end position="252"/>
    </location>
</feature>
<feature type="region of interest" description="Interaction with substrate tRNA" evidence="1">
    <location>
        <begin position="280"/>
        <end position="287"/>
    </location>
</feature>
<feature type="binding site" evidence="1">
    <location>
        <begin position="17"/>
        <end position="24"/>
    </location>
    <ligand>
        <name>ATP</name>
        <dbReference type="ChEBI" id="CHEBI:30616"/>
    </ligand>
</feature>
<feature type="binding site" evidence="1">
    <location>
        <begin position="19"/>
        <end position="24"/>
    </location>
    <ligand>
        <name>substrate</name>
    </ligand>
</feature>
<feature type="site" description="Interaction with substrate tRNA" evidence="1">
    <location>
        <position position="108"/>
    </location>
</feature>
<feature type="site" description="Interaction with substrate tRNA" evidence="1">
    <location>
        <position position="130"/>
    </location>
</feature>
<organism>
    <name type="scientific">Escherichia coli O139:H28 (strain E24377A / ETEC)</name>
    <dbReference type="NCBI Taxonomy" id="331111"/>
    <lineage>
        <taxon>Bacteria</taxon>
        <taxon>Pseudomonadati</taxon>
        <taxon>Pseudomonadota</taxon>
        <taxon>Gammaproteobacteria</taxon>
        <taxon>Enterobacterales</taxon>
        <taxon>Enterobacteriaceae</taxon>
        <taxon>Escherichia</taxon>
    </lineage>
</organism>
<evidence type="ECO:0000255" key="1">
    <source>
        <dbReference type="HAMAP-Rule" id="MF_00185"/>
    </source>
</evidence>